<keyword id="KW-0968">Cytoplasmic vesicle</keyword>
<keyword id="KW-0256">Endoplasmic reticulum</keyword>
<keyword id="KW-0931">ER-Golgi transport</keyword>
<keyword id="KW-0472">Membrane</keyword>
<keyword id="KW-0479">Metal-binding</keyword>
<keyword id="KW-0653">Protein transport</keyword>
<keyword id="KW-1185">Reference proteome</keyword>
<keyword id="KW-0813">Transport</keyword>
<keyword id="KW-0862">Zinc</keyword>
<sequence>MANLPKSSVNYPGTLTPLEPNRPSPQPDRTPVPHSPPVVASPIPPRFPQPSFRPDQMSSPSMKSPSLLSPANGIRTGSPIPRLSTPPGPPVFNTPVKPAAVPFRTSPATPQPMAYSSANSSLPVSTPSFYSNGSSVGSQRDLPDVVRMEEPIAADSPYVLFSANKVLKQKKLANVASLGFGAIVSAGREISPGPQIIQRDPHRCLNCGAYSNPYSSILIGSGQWQCVICENMNGSKGEYVASSKNELQNFPELSLPLVDYVQTGNKRPGFVPASDSRTSAPVVLVIDECLDEPHLQHLQSSLHAFVDSLPQTTRLGIILYGRTVSIYDFSEDSVASADVISGAKSPSAESMKALIYGTGVYLSPMHASLKVAHEIFSSLRPYTLNVPEASRDRCLGTAVEAALAIIQGPSAEMSRGVVRRAGGNSRIIVCAGGPITYGPGSVPHSMSHPNYPYMEKTAIKWMENLGREAHRHNTVVDILCAGTCPLRVPILQPLAKASGGVLVLHDDFGEAFGVDLQRAATRAAGSHGLLEVRCSDDILITQVIGPGEEAHSETHETFKSDAALSIQMLSVEETQSFSLSMENKRDIKSDHVFFQFAFHYSDVYQADVSRVITFKLPTVDSISAYLQSVEDEASAVLISKRTLLLAKNQKDAVDMRATVDERIKDIALKFGSQVPKSKLYSFPKELSSLPELLFHLRRGPLLGNIIGHEDERSVLRNLFLNASFDLSLRMVAPRCLMHQEGGTFEELPAYDLSMQSDKAVILDHGTDVFIWLGAELSADEVKSAAVLAACRTLAEELTEFRFPAPRILAFKEGSSQARYFVCRLIPAHKDPPYEQEARFPQIRTLTTEQRMKLKSSFIEFDEASFCEWMRSLKVVPPEPR</sequence>
<organism>
    <name type="scientific">Arabidopsis thaliana</name>
    <name type="common">Mouse-ear cress</name>
    <dbReference type="NCBI Taxonomy" id="3702"/>
    <lineage>
        <taxon>Eukaryota</taxon>
        <taxon>Viridiplantae</taxon>
        <taxon>Streptophyta</taxon>
        <taxon>Embryophyta</taxon>
        <taxon>Tracheophyta</taxon>
        <taxon>Spermatophyta</taxon>
        <taxon>Magnoliopsida</taxon>
        <taxon>eudicotyledons</taxon>
        <taxon>Gunneridae</taxon>
        <taxon>Pentapetalae</taxon>
        <taxon>rosids</taxon>
        <taxon>malvids</taxon>
        <taxon>Brassicales</taxon>
        <taxon>Brassicaceae</taxon>
        <taxon>Camelineae</taxon>
        <taxon>Arabidopsis</taxon>
    </lineage>
</organism>
<comment type="function">
    <text evidence="2 4">Component of the coat protein complex II (COPII) which promotes the formation of transport vesicles from the endoplasmic reticulum (ER) (By similarity). The coat has two main functions, the physical deformation of the endoplasmic reticulum membrane into vesicles and the selection of cargo molecules (By similarity). May contribute to COPII-coated vesicles formation and ER-Golgi vesicle transport (PubMed:29390074). Together with SEC23D, essential for pollen wall development and exine patterning, probably by regulating endoplasmic reticulum (ER) export of lipids and proteins (e.g. sporopollenin) necessary for pollen wall formation (PubMed:29390074). Also involved in plastid physiology in anther tapetal cells (PubMed:29390074).</text>
</comment>
<comment type="subunit">
    <text evidence="1">Component of the coat protein complex II (COPII), composed of at least five proteins: the Sec23/24 complex, the Sec13/31 complex and Sar1.</text>
</comment>
<comment type="subcellular location">
    <subcellularLocation>
        <location evidence="4">Cytoplasmic vesicle</location>
        <location evidence="4">COPII-coated vesicle membrane</location>
        <topology evidence="2">Peripheral membrane protein</topology>
        <orientation evidence="2">Cytoplasmic side</orientation>
    </subcellularLocation>
    <subcellularLocation>
        <location evidence="4">Endoplasmic reticulum membrane</location>
        <topology evidence="2">Peripheral membrane protein</topology>
        <orientation evidence="2">Cytoplasmic side</orientation>
    </subcellularLocation>
    <subcellularLocation>
        <location evidence="2">Membrane</location>
        <topology evidence="2">Peripheral membrane protein</topology>
        <orientation evidence="2">Cytoplasmic side</orientation>
    </subcellularLocation>
    <text evidence="4">Observed at endoplasmic reticulum exit sites (ERESs), characteristic for COPII-coated vesicles localization.</text>
</comment>
<comment type="tissue specificity">
    <text evidence="4">Mostly expressed in seedlings, roots, cotyledons, leaves, trichomes, leaf primordia and flowers, and, to a lower extent, in mature siliques.</text>
</comment>
<comment type="developmental stage">
    <text evidence="4">Detected in the whole seedling except the hypocotyl (PubMed:29390074). Observed in all floral organs, including sepals, petals, filaments, anther walls, mature pollen grains, pollen tubes and young siliques (PubMed:29390074). Highly expressed in the anther tapetum at uninucleate and bicellular stages (PubMed:29390074).</text>
</comment>
<comment type="disruption phenotype">
    <text evidence="4">Despite normal fertility, impaired pollen coat exine pattern formation with reduced sporopollenin levels, associated with altered pollen germination (PubMed:29390074). Plants lacking both SEC23A and SEC23D are semi-sterile and exhibit developmental defects in pollen (especially at the late uninucleate stage) and tapetal cells, including defective exine and intine, as well as signs of cell degeneration and structural abnormalities in organelles of the male gametophytes (PubMed:29390074).</text>
</comment>
<comment type="similarity">
    <text evidence="8">Belongs to the SEC23/SEC24 family. SEC24 subfamily.</text>
</comment>
<comment type="sequence caution" evidence="8">
    <conflict type="erroneous gene model prediction">
        <sequence resource="EMBL-CDS" id="AAD22643"/>
    </conflict>
</comment>
<comment type="sequence caution" evidence="8">
    <conflict type="erroneous gene model prediction">
        <sequence resource="EMBL-CDS" id="CAB80674"/>
    </conflict>
</comment>
<accession>Q84WV4</accession>
<accession>Q67ZK9</accession>
<accession>Q94C84</accession>
<accession>Q9SYI1</accession>
<proteinExistence type="evidence at transcript level"/>
<dbReference type="EMBL" id="AC007138">
    <property type="protein sequence ID" value="AAD22643.1"/>
    <property type="status" value="ALT_SEQ"/>
    <property type="molecule type" value="Genomic_DNA"/>
</dbReference>
<dbReference type="EMBL" id="AL161493">
    <property type="protein sequence ID" value="CAB80674.1"/>
    <property type="status" value="ALT_SEQ"/>
    <property type="molecule type" value="Genomic_DNA"/>
</dbReference>
<dbReference type="EMBL" id="CP002687">
    <property type="protein sequence ID" value="AEE82080.1"/>
    <property type="molecule type" value="Genomic_DNA"/>
</dbReference>
<dbReference type="EMBL" id="CP002687">
    <property type="protein sequence ID" value="ANM67456.1"/>
    <property type="molecule type" value="Genomic_DNA"/>
</dbReference>
<dbReference type="EMBL" id="CP002687">
    <property type="protein sequence ID" value="ANM67457.1"/>
    <property type="molecule type" value="Genomic_DNA"/>
</dbReference>
<dbReference type="EMBL" id="AY035085">
    <property type="protein sequence ID" value="AAK59590.1"/>
    <property type="molecule type" value="mRNA"/>
</dbReference>
<dbReference type="EMBL" id="BT002732">
    <property type="protein sequence ID" value="AAO22561.1"/>
    <property type="molecule type" value="mRNA"/>
</dbReference>
<dbReference type="EMBL" id="AK176108">
    <property type="protein sequence ID" value="BAD43871.1"/>
    <property type="molecule type" value="mRNA"/>
</dbReference>
<dbReference type="PIR" id="C85023">
    <property type="entry name" value="C85023"/>
</dbReference>
<dbReference type="RefSeq" id="NP_001329285.1">
    <property type="nucleotide sequence ID" value="NM_001340337.1"/>
</dbReference>
<dbReference type="RefSeq" id="NP_001329286.1">
    <property type="nucleotide sequence ID" value="NM_001340336.1"/>
</dbReference>
<dbReference type="RefSeq" id="NP_567217.1">
    <property type="nucleotide sequence ID" value="NM_116411.4"/>
</dbReference>
<dbReference type="SMR" id="Q84WV4"/>
<dbReference type="FunCoup" id="Q84WV4">
    <property type="interactions" value="1774"/>
</dbReference>
<dbReference type="STRING" id="3702.Q84WV4"/>
<dbReference type="iPTMnet" id="Q84WV4"/>
<dbReference type="PaxDb" id="3702-AT4G01810.1"/>
<dbReference type="ProMEX" id="Q84WV4"/>
<dbReference type="ProteomicsDB" id="179680"/>
<dbReference type="EnsemblPlants" id="AT4G01810.1">
    <property type="protein sequence ID" value="AT4G01810.1"/>
    <property type="gene ID" value="AT4G01810"/>
</dbReference>
<dbReference type="EnsemblPlants" id="AT4G01810.2">
    <property type="protein sequence ID" value="AT4G01810.2"/>
    <property type="gene ID" value="AT4G01810"/>
</dbReference>
<dbReference type="EnsemblPlants" id="AT4G01810.3">
    <property type="protein sequence ID" value="AT4G01810.3"/>
    <property type="gene ID" value="AT4G01810"/>
</dbReference>
<dbReference type="GeneID" id="828105"/>
<dbReference type="Gramene" id="AT4G01810.1">
    <property type="protein sequence ID" value="AT4G01810.1"/>
    <property type="gene ID" value="AT4G01810"/>
</dbReference>
<dbReference type="Gramene" id="AT4G01810.2">
    <property type="protein sequence ID" value="AT4G01810.2"/>
    <property type="gene ID" value="AT4G01810"/>
</dbReference>
<dbReference type="Gramene" id="AT4G01810.3">
    <property type="protein sequence ID" value="AT4G01810.3"/>
    <property type="gene ID" value="AT4G01810"/>
</dbReference>
<dbReference type="KEGG" id="ath:AT4G01810"/>
<dbReference type="Araport" id="AT4G01810"/>
<dbReference type="TAIR" id="AT4G01810">
    <property type="gene designation" value="ATSEC23A"/>
</dbReference>
<dbReference type="eggNOG" id="KOG1986">
    <property type="taxonomic scope" value="Eukaryota"/>
</dbReference>
<dbReference type="HOGENOM" id="CLU_013303_0_0_1"/>
<dbReference type="InParanoid" id="Q84WV4"/>
<dbReference type="OMA" id="WMERLGH"/>
<dbReference type="PRO" id="PR:Q84WV4"/>
<dbReference type="Proteomes" id="UP000006548">
    <property type="component" value="Chromosome 4"/>
</dbReference>
<dbReference type="ExpressionAtlas" id="Q84WV4">
    <property type="expression patterns" value="baseline and differential"/>
</dbReference>
<dbReference type="GO" id="GO:0030127">
    <property type="term" value="C:COPII vesicle coat"/>
    <property type="evidence" value="ECO:0007669"/>
    <property type="project" value="InterPro"/>
</dbReference>
<dbReference type="GO" id="GO:0005737">
    <property type="term" value="C:cytoplasm"/>
    <property type="evidence" value="ECO:0000314"/>
    <property type="project" value="TAIR"/>
</dbReference>
<dbReference type="GO" id="GO:0070971">
    <property type="term" value="C:endoplasmic reticulum exit site"/>
    <property type="evidence" value="ECO:0000314"/>
    <property type="project" value="TAIR"/>
</dbReference>
<dbReference type="GO" id="GO:0005789">
    <property type="term" value="C:endoplasmic reticulum membrane"/>
    <property type="evidence" value="ECO:0007669"/>
    <property type="project" value="UniProtKB-SubCell"/>
</dbReference>
<dbReference type="GO" id="GO:0008270">
    <property type="term" value="F:zinc ion binding"/>
    <property type="evidence" value="ECO:0007669"/>
    <property type="project" value="InterPro"/>
</dbReference>
<dbReference type="GO" id="GO:0048658">
    <property type="term" value="P:anther wall tapetum development"/>
    <property type="evidence" value="ECO:0000315"/>
    <property type="project" value="TAIR"/>
</dbReference>
<dbReference type="GO" id="GO:0006888">
    <property type="term" value="P:endoplasmic reticulum to Golgi vesicle-mediated transport"/>
    <property type="evidence" value="ECO:0007669"/>
    <property type="project" value="InterPro"/>
</dbReference>
<dbReference type="GO" id="GO:0006886">
    <property type="term" value="P:intracellular protein transport"/>
    <property type="evidence" value="ECO:0007669"/>
    <property type="project" value="InterPro"/>
</dbReference>
<dbReference type="GO" id="GO:0010584">
    <property type="term" value="P:pollen exine formation"/>
    <property type="evidence" value="ECO:0000315"/>
    <property type="project" value="TAIR"/>
</dbReference>
<dbReference type="CDD" id="cd11280">
    <property type="entry name" value="gelsolin_like"/>
    <property type="match status" value="1"/>
</dbReference>
<dbReference type="CDD" id="cd01468">
    <property type="entry name" value="trunk_domain"/>
    <property type="match status" value="1"/>
</dbReference>
<dbReference type="FunFam" id="1.20.120.730:FF:000007">
    <property type="entry name" value="Protein transport protein SEC23"/>
    <property type="match status" value="1"/>
</dbReference>
<dbReference type="Gene3D" id="1.20.120.730">
    <property type="entry name" value="Sec23/Sec24 helical domain"/>
    <property type="match status" value="1"/>
</dbReference>
<dbReference type="Gene3D" id="3.40.20.10">
    <property type="entry name" value="Severin"/>
    <property type="match status" value="1"/>
</dbReference>
<dbReference type="Gene3D" id="3.40.50.410">
    <property type="entry name" value="von Willebrand factor, type A domain"/>
    <property type="match status" value="1"/>
</dbReference>
<dbReference type="Gene3D" id="2.30.30.380">
    <property type="entry name" value="Zn-finger domain of Sec23/24"/>
    <property type="match status" value="1"/>
</dbReference>
<dbReference type="InterPro" id="IPR029006">
    <property type="entry name" value="ADF-H/Gelsolin-like_dom_sf"/>
</dbReference>
<dbReference type="InterPro" id="IPR007123">
    <property type="entry name" value="Gelsolin-like_dom"/>
</dbReference>
<dbReference type="InterPro" id="IPR036180">
    <property type="entry name" value="Gelsolin-like_dom_sf"/>
</dbReference>
<dbReference type="InterPro" id="IPR037364">
    <property type="entry name" value="Sec23"/>
</dbReference>
<dbReference type="InterPro" id="IPR006900">
    <property type="entry name" value="Sec23/24_helical_dom"/>
</dbReference>
<dbReference type="InterPro" id="IPR036175">
    <property type="entry name" value="Sec23/24_helical_dom_sf"/>
</dbReference>
<dbReference type="InterPro" id="IPR006896">
    <property type="entry name" value="Sec23/24_trunk_dom"/>
</dbReference>
<dbReference type="InterPro" id="IPR012990">
    <property type="entry name" value="Sec23_24_beta_S"/>
</dbReference>
<dbReference type="InterPro" id="IPR036465">
    <property type="entry name" value="vWFA_dom_sf"/>
</dbReference>
<dbReference type="InterPro" id="IPR006895">
    <property type="entry name" value="Znf_Sec23_Sec24"/>
</dbReference>
<dbReference type="InterPro" id="IPR036174">
    <property type="entry name" value="Znf_Sec23_Sec24_sf"/>
</dbReference>
<dbReference type="PANTHER" id="PTHR11141">
    <property type="entry name" value="PROTEIN TRANSPORT PROTEIN SEC23"/>
    <property type="match status" value="1"/>
</dbReference>
<dbReference type="PANTHER" id="PTHR11141:SF6">
    <property type="entry name" value="PROTEIN TRANSPORT PROTEIN SEC23 A"/>
    <property type="match status" value="1"/>
</dbReference>
<dbReference type="Pfam" id="PF00626">
    <property type="entry name" value="Gelsolin"/>
    <property type="match status" value="1"/>
</dbReference>
<dbReference type="Pfam" id="PF08033">
    <property type="entry name" value="Sec23_BS"/>
    <property type="match status" value="1"/>
</dbReference>
<dbReference type="Pfam" id="PF04815">
    <property type="entry name" value="Sec23_helical"/>
    <property type="match status" value="1"/>
</dbReference>
<dbReference type="Pfam" id="PF04811">
    <property type="entry name" value="Sec23_trunk"/>
    <property type="match status" value="1"/>
</dbReference>
<dbReference type="Pfam" id="PF04810">
    <property type="entry name" value="zf-Sec23_Sec24"/>
    <property type="match status" value="1"/>
</dbReference>
<dbReference type="SUPFAM" id="SSF81995">
    <property type="entry name" value="beta-sandwich domain of Sec23/24"/>
    <property type="match status" value="1"/>
</dbReference>
<dbReference type="SUPFAM" id="SSF82754">
    <property type="entry name" value="C-terminal, gelsolin-like domain of Sec23/24"/>
    <property type="match status" value="1"/>
</dbReference>
<dbReference type="SUPFAM" id="SSF81811">
    <property type="entry name" value="Helical domain of Sec23/24"/>
    <property type="match status" value="1"/>
</dbReference>
<dbReference type="SUPFAM" id="SSF53300">
    <property type="entry name" value="vWA-like"/>
    <property type="match status" value="1"/>
</dbReference>
<dbReference type="SUPFAM" id="SSF82919">
    <property type="entry name" value="Zn-finger domain of Sec23/24"/>
    <property type="match status" value="1"/>
</dbReference>
<evidence type="ECO:0000250" key="1">
    <source>
        <dbReference type="UniProtKB" id="O95486"/>
    </source>
</evidence>
<evidence type="ECO:0000250" key="2">
    <source>
        <dbReference type="UniProtKB" id="P15303"/>
    </source>
</evidence>
<evidence type="ECO:0000256" key="3">
    <source>
        <dbReference type="SAM" id="MobiDB-lite"/>
    </source>
</evidence>
<evidence type="ECO:0000269" key="4">
    <source>
    </source>
</evidence>
<evidence type="ECO:0000303" key="5">
    <source>
    </source>
</evidence>
<evidence type="ECO:0000303" key="6">
    <source>
    </source>
</evidence>
<evidence type="ECO:0000303" key="7">
    <source>
    </source>
</evidence>
<evidence type="ECO:0000305" key="8"/>
<evidence type="ECO:0000312" key="9">
    <source>
        <dbReference type="Araport" id="AT4G01810"/>
    </source>
</evidence>
<evidence type="ECO:0000312" key="10">
    <source>
        <dbReference type="EMBL" id="AAD22643.1"/>
    </source>
</evidence>
<name>SC23A_ARATH</name>
<gene>
    <name evidence="6 7" type="primary">SEC23A</name>
    <name evidence="9" type="ordered locus">At4g01810</name>
    <name evidence="10" type="ORF">T7B11.7</name>
</gene>
<protein>
    <recommendedName>
        <fullName evidence="6 7">Protein transport protein SEC23 A</fullName>
        <shortName evidence="7">AtSEC23A</shortName>
    </recommendedName>
    <alternativeName>
        <fullName evidence="5">Protein transport protein SEC23/SEC24-like 2</fullName>
        <shortName evidence="5">AtSec23/Sec24L2</shortName>
    </alternativeName>
</protein>
<feature type="chain" id="PRO_0000457101" description="Protein transport protein SEC23 A">
    <location>
        <begin position="1"/>
        <end position="880"/>
    </location>
</feature>
<feature type="region of interest" description="Disordered" evidence="3">
    <location>
        <begin position="1"/>
        <end position="95"/>
    </location>
</feature>
<feature type="region of interest" description="Zinc finger-like" evidence="1">
    <location>
        <begin position="204"/>
        <end position="229"/>
    </location>
</feature>
<feature type="compositionally biased region" description="Polar residues" evidence="3">
    <location>
        <begin position="1"/>
        <end position="13"/>
    </location>
</feature>
<feature type="compositionally biased region" description="Pro residues" evidence="3">
    <location>
        <begin position="20"/>
        <end position="36"/>
    </location>
</feature>
<feature type="compositionally biased region" description="Low complexity" evidence="3">
    <location>
        <begin position="57"/>
        <end position="70"/>
    </location>
</feature>
<feature type="binding site" evidence="2">
    <location>
        <position position="204"/>
    </location>
    <ligand>
        <name>Zn(2+)</name>
        <dbReference type="ChEBI" id="CHEBI:29105"/>
    </ligand>
</feature>
<feature type="binding site" evidence="2">
    <location>
        <position position="207"/>
    </location>
    <ligand>
        <name>Zn(2+)</name>
        <dbReference type="ChEBI" id="CHEBI:29105"/>
    </ligand>
</feature>
<feature type="binding site" evidence="2">
    <location>
        <position position="226"/>
    </location>
    <ligand>
        <name>Zn(2+)</name>
        <dbReference type="ChEBI" id="CHEBI:29105"/>
    </ligand>
</feature>
<feature type="binding site" evidence="2">
    <location>
        <position position="229"/>
    </location>
    <ligand>
        <name>Zn(2+)</name>
        <dbReference type="ChEBI" id="CHEBI:29105"/>
    </ligand>
</feature>
<feature type="sequence conflict" description="In Ref. 3; AAK59590." evidence="8" ref="3">
    <original>H</original>
    <variation>R</variation>
    <location>
        <position position="448"/>
    </location>
</feature>
<reference key="1">
    <citation type="journal article" date="1999" name="Nature">
        <title>Sequence and analysis of chromosome 4 of the plant Arabidopsis thaliana.</title>
        <authorList>
            <person name="Mayer K.F.X."/>
            <person name="Schueller C."/>
            <person name="Wambutt R."/>
            <person name="Murphy G."/>
            <person name="Volckaert G."/>
            <person name="Pohl T."/>
            <person name="Duesterhoeft A."/>
            <person name="Stiekema W."/>
            <person name="Entian K.-D."/>
            <person name="Terryn N."/>
            <person name="Harris B."/>
            <person name="Ansorge W."/>
            <person name="Brandt P."/>
            <person name="Grivell L.A."/>
            <person name="Rieger M."/>
            <person name="Weichselgartner M."/>
            <person name="de Simone V."/>
            <person name="Obermaier B."/>
            <person name="Mache R."/>
            <person name="Mueller M."/>
            <person name="Kreis M."/>
            <person name="Delseny M."/>
            <person name="Puigdomenech P."/>
            <person name="Watson M."/>
            <person name="Schmidtheini T."/>
            <person name="Reichert B."/>
            <person name="Portetelle D."/>
            <person name="Perez-Alonso M."/>
            <person name="Boutry M."/>
            <person name="Bancroft I."/>
            <person name="Vos P."/>
            <person name="Hoheisel J."/>
            <person name="Zimmermann W."/>
            <person name="Wedler H."/>
            <person name="Ridley P."/>
            <person name="Langham S.-A."/>
            <person name="McCullagh B."/>
            <person name="Bilham L."/>
            <person name="Robben J."/>
            <person name="van der Schueren J."/>
            <person name="Grymonprez B."/>
            <person name="Chuang Y.-J."/>
            <person name="Vandenbussche F."/>
            <person name="Braeken M."/>
            <person name="Weltjens I."/>
            <person name="Voet M."/>
            <person name="Bastiaens I."/>
            <person name="Aert R."/>
            <person name="Defoor E."/>
            <person name="Weitzenegger T."/>
            <person name="Bothe G."/>
            <person name="Ramsperger U."/>
            <person name="Hilbert H."/>
            <person name="Braun M."/>
            <person name="Holzer E."/>
            <person name="Brandt A."/>
            <person name="Peters S."/>
            <person name="van Staveren M."/>
            <person name="Dirkse W."/>
            <person name="Mooijman P."/>
            <person name="Klein Lankhorst R."/>
            <person name="Rose M."/>
            <person name="Hauf J."/>
            <person name="Koetter P."/>
            <person name="Berneiser S."/>
            <person name="Hempel S."/>
            <person name="Feldpausch M."/>
            <person name="Lamberth S."/>
            <person name="Van den Daele H."/>
            <person name="De Keyser A."/>
            <person name="Buysshaert C."/>
            <person name="Gielen J."/>
            <person name="Villarroel R."/>
            <person name="De Clercq R."/>
            <person name="van Montagu M."/>
            <person name="Rogers J."/>
            <person name="Cronin A."/>
            <person name="Quail M.A."/>
            <person name="Bray-Allen S."/>
            <person name="Clark L."/>
            <person name="Doggett J."/>
            <person name="Hall S."/>
            <person name="Kay M."/>
            <person name="Lennard N."/>
            <person name="McLay K."/>
            <person name="Mayes R."/>
            <person name="Pettett A."/>
            <person name="Rajandream M.A."/>
            <person name="Lyne M."/>
            <person name="Benes V."/>
            <person name="Rechmann S."/>
            <person name="Borkova D."/>
            <person name="Bloecker H."/>
            <person name="Scharfe M."/>
            <person name="Grimm M."/>
            <person name="Loehnert T.-H."/>
            <person name="Dose S."/>
            <person name="de Haan M."/>
            <person name="Maarse A.C."/>
            <person name="Schaefer M."/>
            <person name="Mueller-Auer S."/>
            <person name="Gabel C."/>
            <person name="Fuchs M."/>
            <person name="Fartmann B."/>
            <person name="Granderath K."/>
            <person name="Dauner D."/>
            <person name="Herzl A."/>
            <person name="Neumann S."/>
            <person name="Argiriou A."/>
            <person name="Vitale D."/>
            <person name="Liguori R."/>
            <person name="Piravandi E."/>
            <person name="Massenet O."/>
            <person name="Quigley F."/>
            <person name="Clabauld G."/>
            <person name="Muendlein A."/>
            <person name="Felber R."/>
            <person name="Schnabl S."/>
            <person name="Hiller R."/>
            <person name="Schmidt W."/>
            <person name="Lecharny A."/>
            <person name="Aubourg S."/>
            <person name="Chefdor F."/>
            <person name="Cooke R."/>
            <person name="Berger C."/>
            <person name="Monfort A."/>
            <person name="Casacuberta E."/>
            <person name="Gibbons T."/>
            <person name="Weber N."/>
            <person name="Vandenbol M."/>
            <person name="Bargues M."/>
            <person name="Terol J."/>
            <person name="Torres A."/>
            <person name="Perez-Perez A."/>
            <person name="Purnelle B."/>
            <person name="Bent E."/>
            <person name="Johnson S."/>
            <person name="Tacon D."/>
            <person name="Jesse T."/>
            <person name="Heijnen L."/>
            <person name="Schwarz S."/>
            <person name="Scholler P."/>
            <person name="Heber S."/>
            <person name="Francs P."/>
            <person name="Bielke C."/>
            <person name="Frishman D."/>
            <person name="Haase D."/>
            <person name="Lemcke K."/>
            <person name="Mewes H.-W."/>
            <person name="Stocker S."/>
            <person name="Zaccaria P."/>
            <person name="Bevan M."/>
            <person name="Wilson R.K."/>
            <person name="de la Bastide M."/>
            <person name="Habermann K."/>
            <person name="Parnell L."/>
            <person name="Dedhia N."/>
            <person name="Gnoj L."/>
            <person name="Schutz K."/>
            <person name="Huang E."/>
            <person name="Spiegel L."/>
            <person name="Sekhon M."/>
            <person name="Murray J."/>
            <person name="Sheet P."/>
            <person name="Cordes M."/>
            <person name="Abu-Threideh J."/>
            <person name="Stoneking T."/>
            <person name="Kalicki J."/>
            <person name="Graves T."/>
            <person name="Harmon G."/>
            <person name="Edwards J."/>
            <person name="Latreille P."/>
            <person name="Courtney L."/>
            <person name="Cloud J."/>
            <person name="Abbott A."/>
            <person name="Scott K."/>
            <person name="Johnson D."/>
            <person name="Minx P."/>
            <person name="Bentley D."/>
            <person name="Fulton B."/>
            <person name="Miller N."/>
            <person name="Greco T."/>
            <person name="Kemp K."/>
            <person name="Kramer J."/>
            <person name="Fulton L."/>
            <person name="Mardis E."/>
            <person name="Dante M."/>
            <person name="Pepin K."/>
            <person name="Hillier L.W."/>
            <person name="Nelson J."/>
            <person name="Spieth J."/>
            <person name="Ryan E."/>
            <person name="Andrews S."/>
            <person name="Geisel C."/>
            <person name="Layman D."/>
            <person name="Du H."/>
            <person name="Ali J."/>
            <person name="Berghoff A."/>
            <person name="Jones K."/>
            <person name="Drone K."/>
            <person name="Cotton M."/>
            <person name="Joshu C."/>
            <person name="Antonoiu B."/>
            <person name="Zidanic M."/>
            <person name="Strong C."/>
            <person name="Sun H."/>
            <person name="Lamar B."/>
            <person name="Yordan C."/>
            <person name="Ma P."/>
            <person name="Zhong J."/>
            <person name="Preston R."/>
            <person name="Vil D."/>
            <person name="Shekher M."/>
            <person name="Matero A."/>
            <person name="Shah R."/>
            <person name="Swaby I.K."/>
            <person name="O'Shaughnessy A."/>
            <person name="Rodriguez M."/>
            <person name="Hoffman J."/>
            <person name="Till S."/>
            <person name="Granat S."/>
            <person name="Shohdy N."/>
            <person name="Hasegawa A."/>
            <person name="Hameed A."/>
            <person name="Lodhi M."/>
            <person name="Johnson A."/>
            <person name="Chen E."/>
            <person name="Marra M.A."/>
            <person name="Martienssen R."/>
            <person name="McCombie W.R."/>
        </authorList>
    </citation>
    <scope>NUCLEOTIDE SEQUENCE [LARGE SCALE GENOMIC DNA]</scope>
    <source>
        <strain>cv. Columbia</strain>
    </source>
</reference>
<reference key="2">
    <citation type="journal article" date="2017" name="Plant J.">
        <title>Araport11: a complete reannotation of the Arabidopsis thaliana reference genome.</title>
        <authorList>
            <person name="Cheng C.Y."/>
            <person name="Krishnakumar V."/>
            <person name="Chan A.P."/>
            <person name="Thibaud-Nissen F."/>
            <person name="Schobel S."/>
            <person name="Town C.D."/>
        </authorList>
    </citation>
    <scope>GENOME REANNOTATION</scope>
    <source>
        <strain>cv. Columbia</strain>
    </source>
</reference>
<reference key="3">
    <citation type="journal article" date="2003" name="Science">
        <title>Empirical analysis of transcriptional activity in the Arabidopsis genome.</title>
        <authorList>
            <person name="Yamada K."/>
            <person name="Lim J."/>
            <person name="Dale J.M."/>
            <person name="Chen H."/>
            <person name="Shinn P."/>
            <person name="Palm C.J."/>
            <person name="Southwick A.M."/>
            <person name="Wu H.C."/>
            <person name="Kim C.J."/>
            <person name="Nguyen M."/>
            <person name="Pham P.K."/>
            <person name="Cheuk R.F."/>
            <person name="Karlin-Newmann G."/>
            <person name="Liu S.X."/>
            <person name="Lam B."/>
            <person name="Sakano H."/>
            <person name="Wu T."/>
            <person name="Yu G."/>
            <person name="Miranda M."/>
            <person name="Quach H.L."/>
            <person name="Tripp M."/>
            <person name="Chang C.H."/>
            <person name="Lee J.M."/>
            <person name="Toriumi M.J."/>
            <person name="Chan M.M."/>
            <person name="Tang C.C."/>
            <person name="Onodera C.S."/>
            <person name="Deng J.M."/>
            <person name="Akiyama K."/>
            <person name="Ansari Y."/>
            <person name="Arakawa T."/>
            <person name="Banh J."/>
            <person name="Banno F."/>
            <person name="Bowser L."/>
            <person name="Brooks S.Y."/>
            <person name="Carninci P."/>
            <person name="Chao Q."/>
            <person name="Choy N."/>
            <person name="Enju A."/>
            <person name="Goldsmith A.D."/>
            <person name="Gurjal M."/>
            <person name="Hansen N.F."/>
            <person name="Hayashizaki Y."/>
            <person name="Johnson-Hopson C."/>
            <person name="Hsuan V.W."/>
            <person name="Iida K."/>
            <person name="Karnes M."/>
            <person name="Khan S."/>
            <person name="Koesema E."/>
            <person name="Ishida J."/>
            <person name="Jiang P.X."/>
            <person name="Jones T."/>
            <person name="Kawai J."/>
            <person name="Kamiya A."/>
            <person name="Meyers C."/>
            <person name="Nakajima M."/>
            <person name="Narusaka M."/>
            <person name="Seki M."/>
            <person name="Sakurai T."/>
            <person name="Satou M."/>
            <person name="Tamse R."/>
            <person name="Vaysberg M."/>
            <person name="Wallender E.K."/>
            <person name="Wong C."/>
            <person name="Yamamura Y."/>
            <person name="Yuan S."/>
            <person name="Shinozaki K."/>
            <person name="Davis R.W."/>
            <person name="Theologis A."/>
            <person name="Ecker J.R."/>
        </authorList>
    </citation>
    <scope>NUCLEOTIDE SEQUENCE [LARGE SCALE MRNA]</scope>
    <source>
        <strain>cv. Columbia</strain>
    </source>
</reference>
<reference key="4">
    <citation type="submission" date="2004-09" db="EMBL/GenBank/DDBJ databases">
        <title>Large-scale analysis of RIKEN Arabidopsis full-length (RAFL) cDNAs.</title>
        <authorList>
            <person name="Totoki Y."/>
            <person name="Seki M."/>
            <person name="Ishida J."/>
            <person name="Nakajima M."/>
            <person name="Enju A."/>
            <person name="Kamiya A."/>
            <person name="Narusaka M."/>
            <person name="Shin-i T."/>
            <person name="Nakagawa M."/>
            <person name="Sakamoto N."/>
            <person name="Oishi K."/>
            <person name="Kohara Y."/>
            <person name="Kobayashi M."/>
            <person name="Toyoda A."/>
            <person name="Sakaki Y."/>
            <person name="Sakurai T."/>
            <person name="Iida K."/>
            <person name="Akiyama K."/>
            <person name="Satou M."/>
            <person name="Toyoda T."/>
            <person name="Konagaya A."/>
            <person name="Carninci P."/>
            <person name="Kawai J."/>
            <person name="Hayashizaki Y."/>
            <person name="Shinozaki K."/>
        </authorList>
    </citation>
    <scope>NUCLEOTIDE SEQUENCE [LARGE SCALE MRNA] OF 836-880</scope>
    <source>
        <strain>cv. Columbia</strain>
    </source>
</reference>
<reference key="5">
    <citation type="journal article" date="2014" name="PLoS ONE">
        <title>Study of the plant COPII vesicle coat subunits by functional complementation of yeast Saccharomyces cerevisiae mutants.</title>
        <authorList>
            <person name="De Craene J.-O."/>
            <person name="Courte F."/>
            <person name="Rinaldi B."/>
            <person name="Fitterer C."/>
            <person name="Herranz M.C."/>
            <person name="Schmitt-Keichinger C."/>
            <person name="Ritzenthaler C."/>
            <person name="Friant S."/>
        </authorList>
    </citation>
    <scope>GENE FAMILY</scope>
    <source>
        <strain>cv. Columbia</strain>
    </source>
</reference>
<reference key="6">
    <citation type="journal article" date="2016" name="Trends Plant Sci.">
        <title>COPII paralogs in plants: functional redundancy or diversity?</title>
        <authorList>
            <person name="Chung K.P."/>
            <person name="Zeng Y."/>
            <person name="Jiang L."/>
        </authorList>
    </citation>
    <scope>REVIEW ON COAT PROTEIN COMPLEX II (COPII) VESICLES</scope>
    <scope>GENE FAMILY</scope>
    <scope>NOMENCLATURE</scope>
</reference>
<reference key="7">
    <citation type="journal article" date="2018" name="J. Exp. Bot.">
        <title>The Arabidopsis COPII components, AtSEC23A and AtSEC23D, are essential for pollen wall development and exine patterning.</title>
        <authorList>
            <person name="Aboulela M."/>
            <person name="Nakagawa T."/>
            <person name="Oshima A."/>
            <person name="Nishimura K."/>
            <person name="Tanaka Y."/>
        </authorList>
    </citation>
    <scope>FUNCTION</scope>
    <scope>DISRUPTION PHENOTYPE</scope>
    <scope>TISSUE SPECIFICITY</scope>
    <scope>DEVELOPMENTAL STAGE</scope>
    <scope>SUBCELLULAR LOCATION</scope>
    <scope>GENE FAMILY</scope>
    <scope>NOMENCLATURE</scope>
    <source>
        <strain>cv. Columbia</strain>
    </source>
</reference>